<organism>
    <name type="scientific">Corynebacterium glutamicum (strain ATCC 13032 / DSM 20300 / JCM 1318 / BCRC 11384 / CCUG 27702 / LMG 3730 / NBRC 12168 / NCIMB 10025 / NRRL B-2784 / 534)</name>
    <dbReference type="NCBI Taxonomy" id="196627"/>
    <lineage>
        <taxon>Bacteria</taxon>
        <taxon>Bacillati</taxon>
        <taxon>Actinomycetota</taxon>
        <taxon>Actinomycetes</taxon>
        <taxon>Mycobacteriales</taxon>
        <taxon>Corynebacteriaceae</taxon>
        <taxon>Corynebacterium</taxon>
    </lineage>
</organism>
<name>DUT_CORGL</name>
<accession>Q8NPA9</accession>
<evidence type="ECO:0000255" key="1">
    <source>
        <dbReference type="HAMAP-Rule" id="MF_00116"/>
    </source>
</evidence>
<feature type="chain" id="PRO_0000182855" description="Deoxyuridine 5'-triphosphate nucleotidohydrolase">
    <location>
        <begin position="1"/>
        <end position="149"/>
    </location>
</feature>
<feature type="binding site" evidence="1">
    <location>
        <begin position="66"/>
        <end position="68"/>
    </location>
    <ligand>
        <name>substrate</name>
    </ligand>
</feature>
<feature type="binding site" evidence="1">
    <location>
        <position position="79"/>
    </location>
    <ligand>
        <name>substrate</name>
    </ligand>
</feature>
<feature type="binding site" evidence="1">
    <location>
        <begin position="83"/>
        <end position="85"/>
    </location>
    <ligand>
        <name>substrate</name>
    </ligand>
</feature>
<feature type="binding site" evidence="1">
    <location>
        <position position="93"/>
    </location>
    <ligand>
        <name>substrate</name>
    </ligand>
</feature>
<sequence length="149" mass="15863">MTDLAAIKIVRLDKELPLPKRAHRGDAGVDLHATTDAVIAPGHREIVGTGIAIALPLGTVGLVHPRSGLAAREGLSIVNAPGTIDADYRGEIKVCLINLDPEKPIMITRGDRIAQLVIQKVELVDFEEVEELDDTVRGDQGYGSTGKTA</sequence>
<keyword id="KW-0378">Hydrolase</keyword>
<keyword id="KW-0460">Magnesium</keyword>
<keyword id="KW-0479">Metal-binding</keyword>
<keyword id="KW-0546">Nucleotide metabolism</keyword>
<keyword id="KW-1185">Reference proteome</keyword>
<gene>
    <name evidence="1" type="primary">dut</name>
    <name type="ordered locus">Cgl1905</name>
    <name type="ordered locus">cg2086</name>
</gene>
<reference key="1">
    <citation type="journal article" date="2003" name="Appl. Microbiol. Biotechnol.">
        <title>The Corynebacterium glutamicum genome: features and impacts on biotechnological processes.</title>
        <authorList>
            <person name="Ikeda M."/>
            <person name="Nakagawa S."/>
        </authorList>
    </citation>
    <scope>NUCLEOTIDE SEQUENCE [LARGE SCALE GENOMIC DNA]</scope>
    <source>
        <strain>ATCC 13032 / DSM 20300 / JCM 1318 / BCRC 11384 / CCUG 27702 / LMG 3730 / NBRC 12168 / NCIMB 10025 / NRRL B-2784 / 534</strain>
    </source>
</reference>
<reference key="2">
    <citation type="journal article" date="2003" name="J. Biotechnol.">
        <title>The complete Corynebacterium glutamicum ATCC 13032 genome sequence and its impact on the production of L-aspartate-derived amino acids and vitamins.</title>
        <authorList>
            <person name="Kalinowski J."/>
            <person name="Bathe B."/>
            <person name="Bartels D."/>
            <person name="Bischoff N."/>
            <person name="Bott M."/>
            <person name="Burkovski A."/>
            <person name="Dusch N."/>
            <person name="Eggeling L."/>
            <person name="Eikmanns B.J."/>
            <person name="Gaigalat L."/>
            <person name="Goesmann A."/>
            <person name="Hartmann M."/>
            <person name="Huthmacher K."/>
            <person name="Kraemer R."/>
            <person name="Linke B."/>
            <person name="McHardy A.C."/>
            <person name="Meyer F."/>
            <person name="Moeckel B."/>
            <person name="Pfefferle W."/>
            <person name="Puehler A."/>
            <person name="Rey D.A."/>
            <person name="Rueckert C."/>
            <person name="Rupp O."/>
            <person name="Sahm H."/>
            <person name="Wendisch V.F."/>
            <person name="Wiegraebe I."/>
            <person name="Tauch A."/>
        </authorList>
    </citation>
    <scope>NUCLEOTIDE SEQUENCE [LARGE SCALE GENOMIC DNA]</scope>
    <source>
        <strain>ATCC 13032 / DSM 20300 / JCM 1318 / BCRC 11384 / CCUG 27702 / LMG 3730 / NBRC 12168 / NCIMB 10025 / NRRL B-2784 / 534</strain>
    </source>
</reference>
<proteinExistence type="inferred from homology"/>
<dbReference type="EC" id="3.6.1.23" evidence="1"/>
<dbReference type="EMBL" id="BA000036">
    <property type="protein sequence ID" value="BAB99298.1"/>
    <property type="molecule type" value="Genomic_DNA"/>
</dbReference>
<dbReference type="EMBL" id="BX927153">
    <property type="protein sequence ID" value="CAF20245.1"/>
    <property type="molecule type" value="Genomic_DNA"/>
</dbReference>
<dbReference type="RefSeq" id="NP_601111.1">
    <property type="nucleotide sequence ID" value="NC_003450.3"/>
</dbReference>
<dbReference type="RefSeq" id="WP_011014744.1">
    <property type="nucleotide sequence ID" value="NC_006958.1"/>
</dbReference>
<dbReference type="SMR" id="Q8NPA9"/>
<dbReference type="STRING" id="196627.cg2086"/>
<dbReference type="GeneID" id="1019862"/>
<dbReference type="KEGG" id="cgb:cg2086"/>
<dbReference type="KEGG" id="cgl:Cgl1905"/>
<dbReference type="PATRIC" id="fig|196627.13.peg.1842"/>
<dbReference type="eggNOG" id="COG0756">
    <property type="taxonomic scope" value="Bacteria"/>
</dbReference>
<dbReference type="HOGENOM" id="CLU_068508_1_3_11"/>
<dbReference type="OrthoDB" id="9809956at2"/>
<dbReference type="BioCyc" id="CORYNE:G18NG-11497-MONOMER"/>
<dbReference type="UniPathway" id="UPA00610">
    <property type="reaction ID" value="UER00666"/>
</dbReference>
<dbReference type="Proteomes" id="UP000000582">
    <property type="component" value="Chromosome"/>
</dbReference>
<dbReference type="Proteomes" id="UP000001009">
    <property type="component" value="Chromosome"/>
</dbReference>
<dbReference type="GO" id="GO:0004170">
    <property type="term" value="F:dUTP diphosphatase activity"/>
    <property type="evidence" value="ECO:0007669"/>
    <property type="project" value="UniProtKB-UniRule"/>
</dbReference>
<dbReference type="GO" id="GO:0000287">
    <property type="term" value="F:magnesium ion binding"/>
    <property type="evidence" value="ECO:0007669"/>
    <property type="project" value="UniProtKB-UniRule"/>
</dbReference>
<dbReference type="GO" id="GO:0006226">
    <property type="term" value="P:dUMP biosynthetic process"/>
    <property type="evidence" value="ECO:0007669"/>
    <property type="project" value="UniProtKB-UniRule"/>
</dbReference>
<dbReference type="GO" id="GO:0046081">
    <property type="term" value="P:dUTP catabolic process"/>
    <property type="evidence" value="ECO:0007669"/>
    <property type="project" value="InterPro"/>
</dbReference>
<dbReference type="CDD" id="cd07557">
    <property type="entry name" value="trimeric_dUTPase"/>
    <property type="match status" value="1"/>
</dbReference>
<dbReference type="FunFam" id="2.70.40.10:FF:000008">
    <property type="entry name" value="Deoxyuridine 5'-triphosphate nucleotidohydrolase"/>
    <property type="match status" value="1"/>
</dbReference>
<dbReference type="Gene3D" id="2.70.40.10">
    <property type="match status" value="1"/>
</dbReference>
<dbReference type="HAMAP" id="MF_00116">
    <property type="entry name" value="dUTPase_bact"/>
    <property type="match status" value="1"/>
</dbReference>
<dbReference type="InterPro" id="IPR008181">
    <property type="entry name" value="dUTPase"/>
</dbReference>
<dbReference type="InterPro" id="IPR029054">
    <property type="entry name" value="dUTPase-like"/>
</dbReference>
<dbReference type="InterPro" id="IPR036157">
    <property type="entry name" value="dUTPase-like_sf"/>
</dbReference>
<dbReference type="InterPro" id="IPR033704">
    <property type="entry name" value="dUTPase_trimeric"/>
</dbReference>
<dbReference type="NCBIfam" id="TIGR00576">
    <property type="entry name" value="dut"/>
    <property type="match status" value="1"/>
</dbReference>
<dbReference type="NCBIfam" id="NF001862">
    <property type="entry name" value="PRK00601.1"/>
    <property type="match status" value="1"/>
</dbReference>
<dbReference type="PANTHER" id="PTHR11241">
    <property type="entry name" value="DEOXYURIDINE 5'-TRIPHOSPHATE NUCLEOTIDOHYDROLASE"/>
    <property type="match status" value="1"/>
</dbReference>
<dbReference type="PANTHER" id="PTHR11241:SF0">
    <property type="entry name" value="DEOXYURIDINE 5'-TRIPHOSPHATE NUCLEOTIDOHYDROLASE"/>
    <property type="match status" value="1"/>
</dbReference>
<dbReference type="Pfam" id="PF00692">
    <property type="entry name" value="dUTPase"/>
    <property type="match status" value="1"/>
</dbReference>
<dbReference type="SUPFAM" id="SSF51283">
    <property type="entry name" value="dUTPase-like"/>
    <property type="match status" value="1"/>
</dbReference>
<protein>
    <recommendedName>
        <fullName evidence="1">Deoxyuridine 5'-triphosphate nucleotidohydrolase</fullName>
        <shortName evidence="1">dUTPase</shortName>
        <ecNumber evidence="1">3.6.1.23</ecNumber>
    </recommendedName>
    <alternativeName>
        <fullName evidence="1">dUTP pyrophosphatase</fullName>
    </alternativeName>
</protein>
<comment type="function">
    <text evidence="1">This enzyme is involved in nucleotide metabolism: it produces dUMP, the immediate precursor of thymidine nucleotides and it decreases the intracellular concentration of dUTP so that uracil cannot be incorporated into DNA.</text>
</comment>
<comment type="catalytic activity">
    <reaction evidence="1">
        <text>dUTP + H2O = dUMP + diphosphate + H(+)</text>
        <dbReference type="Rhea" id="RHEA:10248"/>
        <dbReference type="ChEBI" id="CHEBI:15377"/>
        <dbReference type="ChEBI" id="CHEBI:15378"/>
        <dbReference type="ChEBI" id="CHEBI:33019"/>
        <dbReference type="ChEBI" id="CHEBI:61555"/>
        <dbReference type="ChEBI" id="CHEBI:246422"/>
        <dbReference type="EC" id="3.6.1.23"/>
    </reaction>
</comment>
<comment type="cofactor">
    <cofactor evidence="1">
        <name>Mg(2+)</name>
        <dbReference type="ChEBI" id="CHEBI:18420"/>
    </cofactor>
</comment>
<comment type="pathway">
    <text evidence="1">Pyrimidine metabolism; dUMP biosynthesis; dUMP from dCTP (dUTP route): step 2/2.</text>
</comment>
<comment type="similarity">
    <text evidence="1">Belongs to the dUTPase family.</text>
</comment>